<keyword id="KW-1185">Reference proteome</keyword>
<keyword id="KW-0677">Repeat</keyword>
<keyword id="KW-0853">WD repeat</keyword>
<comment type="similarity">
    <text evidence="3">Belongs to the WD repeat EIPR1 family.</text>
</comment>
<organism>
    <name type="scientific">Dictyostelium discoideum</name>
    <name type="common">Social amoeba</name>
    <dbReference type="NCBI Taxonomy" id="44689"/>
    <lineage>
        <taxon>Eukaryota</taxon>
        <taxon>Amoebozoa</taxon>
        <taxon>Evosea</taxon>
        <taxon>Eumycetozoa</taxon>
        <taxon>Dictyostelia</taxon>
        <taxon>Dictyosteliales</taxon>
        <taxon>Dictyosteliaceae</taxon>
        <taxon>Dictyostelium</taxon>
    </lineage>
</organism>
<evidence type="ECO:0000250" key="1">
    <source>
        <dbReference type="UniProtKB" id="Q5PPK9"/>
    </source>
</evidence>
<evidence type="ECO:0000256" key="2">
    <source>
        <dbReference type="SAM" id="MobiDB-lite"/>
    </source>
</evidence>
<evidence type="ECO:0000305" key="3"/>
<feature type="chain" id="PRO_0000327928" description="EARP-interacting protein homolog">
    <location>
        <begin position="1"/>
        <end position="400"/>
    </location>
</feature>
<feature type="repeat" description="WD 1">
    <location>
        <begin position="138"/>
        <end position="178"/>
    </location>
</feature>
<feature type="repeat" description="WD 2">
    <location>
        <begin position="227"/>
        <end position="267"/>
    </location>
</feature>
<feature type="repeat" description="WD 3">
    <location>
        <begin position="271"/>
        <end position="311"/>
    </location>
</feature>
<feature type="repeat" description="WD 4">
    <location>
        <begin position="358"/>
        <end position="397"/>
    </location>
</feature>
<feature type="region of interest" description="Disordered" evidence="2">
    <location>
        <begin position="95"/>
        <end position="114"/>
    </location>
</feature>
<feature type="region of interest" description="Disordered" evidence="2">
    <location>
        <begin position="314"/>
        <end position="348"/>
    </location>
</feature>
<feature type="compositionally biased region" description="Low complexity" evidence="2">
    <location>
        <begin position="96"/>
        <end position="114"/>
    </location>
</feature>
<feature type="compositionally biased region" description="Low complexity" evidence="2">
    <location>
        <begin position="314"/>
        <end position="333"/>
    </location>
</feature>
<gene>
    <name evidence="1" type="primary">eipr1</name>
    <name type="synonym">tssc1</name>
    <name type="ORF">DDB_G0274279</name>
</gene>
<dbReference type="EMBL" id="AAFI02000012">
    <property type="protein sequence ID" value="EAL70032.1"/>
    <property type="molecule type" value="Genomic_DNA"/>
</dbReference>
<dbReference type="RefSeq" id="XP_643981.1">
    <property type="nucleotide sequence ID" value="XM_638889.1"/>
</dbReference>
<dbReference type="SMR" id="Q86A97"/>
<dbReference type="FunCoup" id="Q86A97">
    <property type="interactions" value="241"/>
</dbReference>
<dbReference type="STRING" id="44689.Q86A97"/>
<dbReference type="PaxDb" id="44689-DDB0234267"/>
<dbReference type="EnsemblProtists" id="EAL70032">
    <property type="protein sequence ID" value="EAL70032"/>
    <property type="gene ID" value="DDB_G0274279"/>
</dbReference>
<dbReference type="GeneID" id="8619407"/>
<dbReference type="KEGG" id="ddi:DDB_G0274279"/>
<dbReference type="dictyBase" id="DDB_G0274279">
    <property type="gene designation" value="tssc1"/>
</dbReference>
<dbReference type="VEuPathDB" id="AmoebaDB:DDB_G0274279"/>
<dbReference type="eggNOG" id="KOG1007">
    <property type="taxonomic scope" value="Eukaryota"/>
</dbReference>
<dbReference type="HOGENOM" id="CLU_050772_0_0_1"/>
<dbReference type="InParanoid" id="Q86A97"/>
<dbReference type="OMA" id="HKYAILR"/>
<dbReference type="PhylomeDB" id="Q86A97"/>
<dbReference type="PRO" id="PR:Q86A97"/>
<dbReference type="Proteomes" id="UP000002195">
    <property type="component" value="Chromosome 2"/>
</dbReference>
<dbReference type="GO" id="GO:0045335">
    <property type="term" value="C:phagocytic vesicle"/>
    <property type="evidence" value="ECO:0007005"/>
    <property type="project" value="dictyBase"/>
</dbReference>
<dbReference type="GO" id="GO:0016567">
    <property type="term" value="P:protein ubiquitination"/>
    <property type="evidence" value="ECO:0000318"/>
    <property type="project" value="GO_Central"/>
</dbReference>
<dbReference type="FunFam" id="2.130.10.10:FF:000732">
    <property type="entry name" value="EARP-interacting protein homolog"/>
    <property type="match status" value="1"/>
</dbReference>
<dbReference type="Gene3D" id="2.130.10.10">
    <property type="entry name" value="YVTN repeat-like/Quinoprotein amine dehydrogenase"/>
    <property type="match status" value="1"/>
</dbReference>
<dbReference type="InterPro" id="IPR040323">
    <property type="entry name" value="EIPR1"/>
</dbReference>
<dbReference type="InterPro" id="IPR011047">
    <property type="entry name" value="Quinoprotein_ADH-like_sf"/>
</dbReference>
<dbReference type="InterPro" id="IPR015943">
    <property type="entry name" value="WD40/YVTN_repeat-like_dom_sf"/>
</dbReference>
<dbReference type="InterPro" id="IPR019775">
    <property type="entry name" value="WD40_repeat_CS"/>
</dbReference>
<dbReference type="InterPro" id="IPR001680">
    <property type="entry name" value="WD40_rpt"/>
</dbReference>
<dbReference type="PANTHER" id="PTHR14205:SF15">
    <property type="entry name" value="EARP AND GARP COMPLEX-INTERACTING PROTEIN 1"/>
    <property type="match status" value="1"/>
</dbReference>
<dbReference type="PANTHER" id="PTHR14205">
    <property type="entry name" value="WD-REPEAT PROTEIN"/>
    <property type="match status" value="1"/>
</dbReference>
<dbReference type="Pfam" id="PF23609">
    <property type="entry name" value="Beta-prop_EIPR1"/>
    <property type="match status" value="1"/>
</dbReference>
<dbReference type="Pfam" id="PF00400">
    <property type="entry name" value="WD40"/>
    <property type="match status" value="1"/>
</dbReference>
<dbReference type="SMART" id="SM00320">
    <property type="entry name" value="WD40"/>
    <property type="match status" value="4"/>
</dbReference>
<dbReference type="SUPFAM" id="SSF50998">
    <property type="entry name" value="Quinoprotein alcohol dehydrogenase-like"/>
    <property type="match status" value="1"/>
</dbReference>
<dbReference type="PROSITE" id="PS00678">
    <property type="entry name" value="WD_REPEATS_1"/>
    <property type="match status" value="2"/>
</dbReference>
<dbReference type="PROSITE" id="PS50082">
    <property type="entry name" value="WD_REPEATS_2"/>
    <property type="match status" value="2"/>
</dbReference>
<dbReference type="PROSITE" id="PS50294">
    <property type="entry name" value="WD_REPEATS_REGION"/>
    <property type="match status" value="1"/>
</dbReference>
<sequence>MFNTNTSNISTNVYGLSQKTRALSHITAEADVNRFLVGTTALREENEIALLEAKEGEGVRCLSIFPHPKEIHSITSCPFDSSLFFSVYNTSGGGNNNSNNTNNNDNTNNNTNNNDFKSSLWRINESMDSIEELFELKGHTGIIKPILCDPSGSNNFIISLDDSNIRLWSKIDDQNEPTVIKQFGNLSKLSVGSINPNISNQLATANDVNIKGWDFRNAKETFSMDKAHSEQIRDIDFNPNKPYYLLSAGDDCKLKIWDTRQTRDPVKIFSGHNHWIWSAKFNRYHDQLIITSSSDNTVKLWNLYSLSSAFNSENNISNSNEQQHSQQPNEQQPQQPPQPVKQKKNKRNEDQLIKTYEEHEDSVYNISWSSSNFLFASLSYDGRFVVNNVPKEYSDILSYI</sequence>
<proteinExistence type="evidence at protein level"/>
<name>EIPR1_DICDI</name>
<protein>
    <recommendedName>
        <fullName evidence="1">EARP-interacting protein homolog</fullName>
    </recommendedName>
</protein>
<accession>Q86A97</accession>
<accession>Q555S9</accession>
<reference key="1">
    <citation type="journal article" date="2002" name="Nature">
        <title>Sequence and analysis of chromosome 2 of Dictyostelium discoideum.</title>
        <authorList>
            <person name="Gloeckner G."/>
            <person name="Eichinger L."/>
            <person name="Szafranski K."/>
            <person name="Pachebat J.A."/>
            <person name="Bankier A.T."/>
            <person name="Dear P.H."/>
            <person name="Lehmann R."/>
            <person name="Baumgart C."/>
            <person name="Parra G."/>
            <person name="Abril J.F."/>
            <person name="Guigo R."/>
            <person name="Kumpf K."/>
            <person name="Tunggal B."/>
            <person name="Cox E.C."/>
            <person name="Quail M.A."/>
            <person name="Platzer M."/>
            <person name="Rosenthal A."/>
            <person name="Noegel A.A."/>
        </authorList>
    </citation>
    <scope>NUCLEOTIDE SEQUENCE [LARGE SCALE GENOMIC DNA]</scope>
    <source>
        <strain>AX4</strain>
    </source>
</reference>
<reference key="2">
    <citation type="journal article" date="2005" name="Nature">
        <title>The genome of the social amoeba Dictyostelium discoideum.</title>
        <authorList>
            <person name="Eichinger L."/>
            <person name="Pachebat J.A."/>
            <person name="Gloeckner G."/>
            <person name="Rajandream M.A."/>
            <person name="Sucgang R."/>
            <person name="Berriman M."/>
            <person name="Song J."/>
            <person name="Olsen R."/>
            <person name="Szafranski K."/>
            <person name="Xu Q."/>
            <person name="Tunggal B."/>
            <person name="Kummerfeld S."/>
            <person name="Madera M."/>
            <person name="Konfortov B.A."/>
            <person name="Rivero F."/>
            <person name="Bankier A.T."/>
            <person name="Lehmann R."/>
            <person name="Hamlin N."/>
            <person name="Davies R."/>
            <person name="Gaudet P."/>
            <person name="Fey P."/>
            <person name="Pilcher K."/>
            <person name="Chen G."/>
            <person name="Saunders D."/>
            <person name="Sodergren E.J."/>
            <person name="Davis P."/>
            <person name="Kerhornou A."/>
            <person name="Nie X."/>
            <person name="Hall N."/>
            <person name="Anjard C."/>
            <person name="Hemphill L."/>
            <person name="Bason N."/>
            <person name="Farbrother P."/>
            <person name="Desany B."/>
            <person name="Just E."/>
            <person name="Morio T."/>
            <person name="Rost R."/>
            <person name="Churcher C.M."/>
            <person name="Cooper J."/>
            <person name="Haydock S."/>
            <person name="van Driessche N."/>
            <person name="Cronin A."/>
            <person name="Goodhead I."/>
            <person name="Muzny D.M."/>
            <person name="Mourier T."/>
            <person name="Pain A."/>
            <person name="Lu M."/>
            <person name="Harper D."/>
            <person name="Lindsay R."/>
            <person name="Hauser H."/>
            <person name="James K.D."/>
            <person name="Quiles M."/>
            <person name="Madan Babu M."/>
            <person name="Saito T."/>
            <person name="Buchrieser C."/>
            <person name="Wardroper A."/>
            <person name="Felder M."/>
            <person name="Thangavelu M."/>
            <person name="Johnson D."/>
            <person name="Knights A."/>
            <person name="Loulseged H."/>
            <person name="Mungall K.L."/>
            <person name="Oliver K."/>
            <person name="Price C."/>
            <person name="Quail M.A."/>
            <person name="Urushihara H."/>
            <person name="Hernandez J."/>
            <person name="Rabbinowitsch E."/>
            <person name="Steffen D."/>
            <person name="Sanders M."/>
            <person name="Ma J."/>
            <person name="Kohara Y."/>
            <person name="Sharp S."/>
            <person name="Simmonds M.N."/>
            <person name="Spiegler S."/>
            <person name="Tivey A."/>
            <person name="Sugano S."/>
            <person name="White B."/>
            <person name="Walker D."/>
            <person name="Woodward J.R."/>
            <person name="Winckler T."/>
            <person name="Tanaka Y."/>
            <person name="Shaulsky G."/>
            <person name="Schleicher M."/>
            <person name="Weinstock G.M."/>
            <person name="Rosenthal A."/>
            <person name="Cox E.C."/>
            <person name="Chisholm R.L."/>
            <person name="Gibbs R.A."/>
            <person name="Loomis W.F."/>
            <person name="Platzer M."/>
            <person name="Kay R.R."/>
            <person name="Williams J.G."/>
            <person name="Dear P.H."/>
            <person name="Noegel A.A."/>
            <person name="Barrell B.G."/>
            <person name="Kuspa A."/>
        </authorList>
    </citation>
    <scope>NUCLEOTIDE SEQUENCE [LARGE SCALE GENOMIC DNA]</scope>
    <source>
        <strain>AX4</strain>
    </source>
</reference>
<reference key="3">
    <citation type="journal article" date="2006" name="Mol. Cell. Proteomics">
        <title>Proteomics fingerprinting of phagosome maturation and evidence for the role of a Galpha during uptake.</title>
        <authorList>
            <person name="Gotthardt D."/>
            <person name="Blancheteau V."/>
            <person name="Bosserhoff A."/>
            <person name="Ruppert T."/>
            <person name="Delorenzi M."/>
            <person name="Soldati T."/>
        </authorList>
    </citation>
    <scope>IDENTIFICATION BY MASS SPECTROMETRY [LARGE SCALE ANALYSIS]</scope>
    <source>
        <strain>AX2</strain>
    </source>
</reference>